<protein>
    <recommendedName>
        <fullName evidence="6">HTH-type transcriptional regulator GbdR</fullName>
    </recommendedName>
    <alternativeName>
        <fullName evidence="5">Glycine betaine/dimethylglycine responsive regulator</fullName>
    </alternativeName>
</protein>
<reference key="1">
    <citation type="journal article" date="2006" name="Genome Biol.">
        <title>Genomic analysis reveals that Pseudomonas aeruginosa virulence is combinatorial.</title>
        <authorList>
            <person name="Lee D.G."/>
            <person name="Urbach J.M."/>
            <person name="Wu G."/>
            <person name="Liberati N.T."/>
            <person name="Feinbaum R.L."/>
            <person name="Miyata S."/>
            <person name="Diggins L.T."/>
            <person name="He J."/>
            <person name="Saucier M."/>
            <person name="Deziel E."/>
            <person name="Friedman L."/>
            <person name="Li L."/>
            <person name="Grills G."/>
            <person name="Montgomery K."/>
            <person name="Kucherlapati R."/>
            <person name="Rahme L.G."/>
            <person name="Ausubel F.M."/>
        </authorList>
    </citation>
    <scope>NUCLEOTIDE SEQUENCE [LARGE SCALE GENOMIC DNA]</scope>
    <source>
        <strain>UCBPP-PA14</strain>
    </source>
</reference>
<reference key="2">
    <citation type="journal article" date="2008" name="J. Bacteriol.">
        <title>Identification of two gene clusters and a transcriptional regulator required for Pseudomonas aeruginosa glycine betaine catabolism.</title>
        <authorList>
            <person name="Wargo M.J."/>
            <person name="Szwergold B.S."/>
            <person name="Hogan D.A."/>
        </authorList>
    </citation>
    <scope>FUNCTION</scope>
    <scope>DISRUPTION PHENOTYPE</scope>
    <source>
        <strain>UCBPP-PA14</strain>
    </source>
</reference>
<reference key="3">
    <citation type="journal article" date="2009" name="Infect. Immun.">
        <title>GbdR regulates Pseudomonas aeruginosa plcH and pchP transcription in response to choline catabolites.</title>
        <authorList>
            <person name="Wargo M.J."/>
            <person name="Ho T.C."/>
            <person name="Gross M.J."/>
            <person name="Whittaker L.A."/>
            <person name="Hogan D.A."/>
        </authorList>
    </citation>
    <scope>FUNCTION</scope>
    <scope>DISRUPTION PHENOTYPE</scope>
    <source>
        <strain>UCBPP-PA14</strain>
    </source>
</reference>
<reference key="4">
    <citation type="journal article" date="2014" name="J. Bacteriol.">
        <title>Characterization of the GbdR regulon in Pseudomonas aeruginosa.</title>
        <authorList>
            <person name="Hampel K.J."/>
            <person name="LaBauve A.E."/>
            <person name="Meadows J.A."/>
            <person name="Fitzsimmons L.F."/>
            <person name="Nock A.M."/>
            <person name="Wargo M.J."/>
        </authorList>
    </citation>
    <scope>FUNCTION</scope>
    <scope>DNA-BINDING</scope>
    <source>
        <strain>UCBPP-PA14</strain>
    </source>
</reference>
<proteinExistence type="evidence at protein level"/>
<feature type="chain" id="PRO_0000453826" description="HTH-type transcriptional regulator GbdR">
    <location>
        <begin position="1"/>
        <end position="367"/>
    </location>
</feature>
<feature type="domain" description="HTH araC/xylS-type" evidence="1">
    <location>
        <begin position="227"/>
        <end position="325"/>
    </location>
</feature>
<feature type="DNA-binding region" description="H-T-H motif" evidence="1">
    <location>
        <begin position="244"/>
        <end position="265"/>
    </location>
</feature>
<feature type="DNA-binding region" description="H-T-H motif" evidence="1">
    <location>
        <begin position="292"/>
        <end position="315"/>
    </location>
</feature>
<evidence type="ECO:0000255" key="1">
    <source>
        <dbReference type="PROSITE-ProRule" id="PRU00593"/>
    </source>
</evidence>
<evidence type="ECO:0000269" key="2">
    <source>
    </source>
</evidence>
<evidence type="ECO:0000269" key="3">
    <source>
    </source>
</evidence>
<evidence type="ECO:0000269" key="4">
    <source>
    </source>
</evidence>
<evidence type="ECO:0000303" key="5">
    <source>
    </source>
</evidence>
<evidence type="ECO:0000305" key="6"/>
<evidence type="ECO:0000312" key="7">
    <source>
        <dbReference type="EMBL" id="ABJ14763.1"/>
    </source>
</evidence>
<sequence>MTTYAPGVPPQNRNPQSIGFLLLDNFTLISLASAVEPLRMANQLSGRELYRWHTLSLDGRQVWASDGLQITPDAGTDNAPAVDCVIVCGGVGIQRSVTREHVTFLQAQARQGRRLGAVCTGSWALARAGLLDGYDCSVHWECLAAMQEAFPRVAMSTRLFSIDRNRFTSSGGTAPMDMMLHLIGREHGRELSAAISEMFIYERIRNEQDHQRVPLKHMLGTNQPKLQEIVALMEANLEEPIDLDELAVYVNVSRRQLERLFQKYLHCSPSRYYLKLRLIRARQLLKQTSMSIIEVASVCGFVSTPHFSKCYREYFGIPPRDERQGQPLGQPVVLMPIPQDLALMPNSSALSALSQAQGESTFASVRI</sequence>
<comment type="function">
    <text evidence="2 3 4">Specific regulator of choline metabolism, which activates transcription of at least 25 genes from 11 promoters in response to choline metabolites (PubMed:24097953). Required for the induction of plcH, encoding the phospholipase C, and pchP, encoding the phosphorylcholine phosphatase, in response to glycine betaine (GB) and dimethylglycine (DMG) (PubMed:19103776). Also controls the expression of gbcAB and dgcAB, which are required for GB and DMG degradation, respectively, in response to both GB and DMG (PubMed:17951379). The GbdR regulon also includes genes encoding sarcosine, glycine and serine catabolic enzymes, the BetX and CbcXWV quaternary amine transport proteins and the acetylcholine esterase gene, choE (PubMed:24097953). Acts by binding directly to the promoter region of the genes (PubMed:24097953). May play an important role during P.aeruginosa interactions with eukaryotes (PubMed:17951379).</text>
</comment>
<comment type="disruption phenotype">
    <text evidence="2 3">Mutant is unable to grow on choline, GB and DMG as sole carbon or nitrogen sources (PubMed:17951379). Deletion mutant cannot induce expression of plcH (PubMed:19103776).</text>
</comment>
<name>GBDR_PSEAB</name>
<organism>
    <name type="scientific">Pseudomonas aeruginosa (strain UCBPP-PA14)</name>
    <dbReference type="NCBI Taxonomy" id="208963"/>
    <lineage>
        <taxon>Bacteria</taxon>
        <taxon>Pseudomonadati</taxon>
        <taxon>Pseudomonadota</taxon>
        <taxon>Gammaproteobacteria</taxon>
        <taxon>Pseudomonadales</taxon>
        <taxon>Pseudomonadaceae</taxon>
        <taxon>Pseudomonas</taxon>
    </lineage>
</organism>
<gene>
    <name evidence="5" type="primary">gbdR</name>
    <name evidence="7" type="ordered locus">PA14_71070</name>
</gene>
<dbReference type="EMBL" id="CP000438">
    <property type="protein sequence ID" value="ABJ14763.1"/>
    <property type="molecule type" value="Genomic_DNA"/>
</dbReference>
<dbReference type="RefSeq" id="WP_003096699.1">
    <property type="nucleotide sequence ID" value="NZ_CP034244.1"/>
</dbReference>
<dbReference type="SMR" id="A0A0H2ZIC3"/>
<dbReference type="KEGG" id="pau:PA14_71070"/>
<dbReference type="HOGENOM" id="CLU_000445_59_0_6"/>
<dbReference type="BioCyc" id="PAER208963:G1G74-5980-MONOMER"/>
<dbReference type="Proteomes" id="UP000000653">
    <property type="component" value="Chromosome"/>
</dbReference>
<dbReference type="GO" id="GO:0003700">
    <property type="term" value="F:DNA-binding transcription factor activity"/>
    <property type="evidence" value="ECO:0007669"/>
    <property type="project" value="InterPro"/>
</dbReference>
<dbReference type="GO" id="GO:0043565">
    <property type="term" value="F:sequence-specific DNA binding"/>
    <property type="evidence" value="ECO:0007669"/>
    <property type="project" value="InterPro"/>
</dbReference>
<dbReference type="GO" id="GO:0009893">
    <property type="term" value="P:positive regulation of metabolic process"/>
    <property type="evidence" value="ECO:0007669"/>
    <property type="project" value="UniProtKB-ARBA"/>
</dbReference>
<dbReference type="CDD" id="cd03136">
    <property type="entry name" value="GATase1_AraC_ArgR_like"/>
    <property type="match status" value="1"/>
</dbReference>
<dbReference type="FunFam" id="3.40.50.880:FF:000061">
    <property type="entry name" value="AraC family transcriptional regulator"/>
    <property type="match status" value="1"/>
</dbReference>
<dbReference type="FunFam" id="1.10.10.60:FF:000090">
    <property type="entry name" value="Transcriptional regulator ArgR, AraC family"/>
    <property type="match status" value="1"/>
</dbReference>
<dbReference type="Gene3D" id="3.40.50.880">
    <property type="match status" value="1"/>
</dbReference>
<dbReference type="Gene3D" id="1.10.10.60">
    <property type="entry name" value="Homeodomain-like"/>
    <property type="match status" value="1"/>
</dbReference>
<dbReference type="InterPro" id="IPR029062">
    <property type="entry name" value="Class_I_gatase-like"/>
</dbReference>
<dbReference type="InterPro" id="IPR002818">
    <property type="entry name" value="DJ-1/PfpI"/>
</dbReference>
<dbReference type="InterPro" id="IPR009057">
    <property type="entry name" value="Homeodomain-like_sf"/>
</dbReference>
<dbReference type="InterPro" id="IPR018060">
    <property type="entry name" value="HTH_AraC"/>
</dbReference>
<dbReference type="InterPro" id="IPR018062">
    <property type="entry name" value="HTH_AraC-typ_CS"/>
</dbReference>
<dbReference type="InterPro" id="IPR052158">
    <property type="entry name" value="INH-QAR"/>
</dbReference>
<dbReference type="PANTHER" id="PTHR43130">
    <property type="entry name" value="ARAC-FAMILY TRANSCRIPTIONAL REGULATOR"/>
    <property type="match status" value="1"/>
</dbReference>
<dbReference type="PANTHER" id="PTHR43130:SF3">
    <property type="entry name" value="HTH-TYPE TRANSCRIPTIONAL REGULATOR RV1931C"/>
    <property type="match status" value="1"/>
</dbReference>
<dbReference type="Pfam" id="PF01965">
    <property type="entry name" value="DJ-1_PfpI"/>
    <property type="match status" value="1"/>
</dbReference>
<dbReference type="Pfam" id="PF12833">
    <property type="entry name" value="HTH_18"/>
    <property type="match status" value="1"/>
</dbReference>
<dbReference type="SMART" id="SM00342">
    <property type="entry name" value="HTH_ARAC"/>
    <property type="match status" value="1"/>
</dbReference>
<dbReference type="SUPFAM" id="SSF52317">
    <property type="entry name" value="Class I glutamine amidotransferase-like"/>
    <property type="match status" value="1"/>
</dbReference>
<dbReference type="SUPFAM" id="SSF46689">
    <property type="entry name" value="Homeodomain-like"/>
    <property type="match status" value="2"/>
</dbReference>
<dbReference type="PROSITE" id="PS00041">
    <property type="entry name" value="HTH_ARAC_FAMILY_1"/>
    <property type="match status" value="1"/>
</dbReference>
<dbReference type="PROSITE" id="PS01124">
    <property type="entry name" value="HTH_ARAC_FAMILY_2"/>
    <property type="match status" value="1"/>
</dbReference>
<keyword id="KW-0010">Activator</keyword>
<keyword id="KW-0238">DNA-binding</keyword>
<keyword id="KW-0804">Transcription</keyword>
<keyword id="KW-0805">Transcription regulation</keyword>
<accession>A0A0H2ZIC3</accession>